<dbReference type="EMBL" id="CP000050">
    <property type="protein sequence ID" value="AAY50370.1"/>
    <property type="molecule type" value="Genomic_DNA"/>
</dbReference>
<dbReference type="RefSeq" id="WP_010371096.1">
    <property type="nucleotide sequence ID" value="NZ_CP155948.1"/>
</dbReference>
<dbReference type="SMR" id="Q4URF3"/>
<dbReference type="GeneID" id="95583328"/>
<dbReference type="KEGG" id="xcb:XC_3326"/>
<dbReference type="HOGENOM" id="CLU_098428_0_0_6"/>
<dbReference type="Proteomes" id="UP000000420">
    <property type="component" value="Chromosome"/>
</dbReference>
<dbReference type="GO" id="GO:1990904">
    <property type="term" value="C:ribonucleoprotein complex"/>
    <property type="evidence" value="ECO:0007669"/>
    <property type="project" value="UniProtKB-KW"/>
</dbReference>
<dbReference type="GO" id="GO:0005840">
    <property type="term" value="C:ribosome"/>
    <property type="evidence" value="ECO:0007669"/>
    <property type="project" value="UniProtKB-KW"/>
</dbReference>
<dbReference type="GO" id="GO:0019843">
    <property type="term" value="F:rRNA binding"/>
    <property type="evidence" value="ECO:0007669"/>
    <property type="project" value="UniProtKB-UniRule"/>
</dbReference>
<dbReference type="GO" id="GO:0003735">
    <property type="term" value="F:structural constituent of ribosome"/>
    <property type="evidence" value="ECO:0007669"/>
    <property type="project" value="InterPro"/>
</dbReference>
<dbReference type="GO" id="GO:0006412">
    <property type="term" value="P:translation"/>
    <property type="evidence" value="ECO:0007669"/>
    <property type="project" value="UniProtKB-UniRule"/>
</dbReference>
<dbReference type="FunFam" id="3.30.1370.30:FF:000003">
    <property type="entry name" value="30S ribosomal protein S8"/>
    <property type="match status" value="1"/>
</dbReference>
<dbReference type="FunFam" id="3.30.1490.10:FF:000001">
    <property type="entry name" value="30S ribosomal protein S8"/>
    <property type="match status" value="1"/>
</dbReference>
<dbReference type="Gene3D" id="3.30.1370.30">
    <property type="match status" value="1"/>
</dbReference>
<dbReference type="Gene3D" id="3.30.1490.10">
    <property type="match status" value="1"/>
</dbReference>
<dbReference type="HAMAP" id="MF_01302_B">
    <property type="entry name" value="Ribosomal_uS8_B"/>
    <property type="match status" value="1"/>
</dbReference>
<dbReference type="InterPro" id="IPR000630">
    <property type="entry name" value="Ribosomal_uS8"/>
</dbReference>
<dbReference type="InterPro" id="IPR047863">
    <property type="entry name" value="Ribosomal_uS8_CS"/>
</dbReference>
<dbReference type="InterPro" id="IPR035987">
    <property type="entry name" value="Ribosomal_uS8_sf"/>
</dbReference>
<dbReference type="NCBIfam" id="NF001109">
    <property type="entry name" value="PRK00136.1"/>
    <property type="match status" value="1"/>
</dbReference>
<dbReference type="PANTHER" id="PTHR11758">
    <property type="entry name" value="40S RIBOSOMAL PROTEIN S15A"/>
    <property type="match status" value="1"/>
</dbReference>
<dbReference type="Pfam" id="PF00410">
    <property type="entry name" value="Ribosomal_S8"/>
    <property type="match status" value="1"/>
</dbReference>
<dbReference type="SUPFAM" id="SSF56047">
    <property type="entry name" value="Ribosomal protein S8"/>
    <property type="match status" value="1"/>
</dbReference>
<dbReference type="PROSITE" id="PS00053">
    <property type="entry name" value="RIBOSOMAL_S8"/>
    <property type="match status" value="1"/>
</dbReference>
<proteinExistence type="inferred from homology"/>
<evidence type="ECO:0000255" key="1">
    <source>
        <dbReference type="HAMAP-Rule" id="MF_01302"/>
    </source>
</evidence>
<evidence type="ECO:0000305" key="2"/>
<organism>
    <name type="scientific">Xanthomonas campestris pv. campestris (strain 8004)</name>
    <dbReference type="NCBI Taxonomy" id="314565"/>
    <lineage>
        <taxon>Bacteria</taxon>
        <taxon>Pseudomonadati</taxon>
        <taxon>Pseudomonadota</taxon>
        <taxon>Gammaproteobacteria</taxon>
        <taxon>Lysobacterales</taxon>
        <taxon>Lysobacteraceae</taxon>
        <taxon>Xanthomonas</taxon>
    </lineage>
</organism>
<gene>
    <name evidence="1" type="primary">rpsH</name>
    <name type="ordered locus">XC_3326</name>
</gene>
<name>RS8_XANC8</name>
<keyword id="KW-0687">Ribonucleoprotein</keyword>
<keyword id="KW-0689">Ribosomal protein</keyword>
<keyword id="KW-0694">RNA-binding</keyword>
<keyword id="KW-0699">rRNA-binding</keyword>
<sequence>MSMTDPIADLLVRIKNAAAVGKQTVKLPSSKIKVAIAQVLKDEGYITDLRVTATENNKSELEIVLKYFEGRPVIETLKRFSRSGLRQYRGKTELPKVLGGLGIAIISTSKGIMTDAQAREAGVGGEVLCFVA</sequence>
<feature type="chain" id="PRO_0000225900" description="Small ribosomal subunit protein uS8">
    <location>
        <begin position="1"/>
        <end position="132"/>
    </location>
</feature>
<accession>Q4URF3</accession>
<protein>
    <recommendedName>
        <fullName evidence="1">Small ribosomal subunit protein uS8</fullName>
    </recommendedName>
    <alternativeName>
        <fullName evidence="2">30S ribosomal protein S8</fullName>
    </alternativeName>
</protein>
<comment type="function">
    <text evidence="1">One of the primary rRNA binding proteins, it binds directly to 16S rRNA central domain where it helps coordinate assembly of the platform of the 30S subunit.</text>
</comment>
<comment type="subunit">
    <text evidence="1">Part of the 30S ribosomal subunit. Contacts proteins S5 and S12.</text>
</comment>
<comment type="similarity">
    <text evidence="1">Belongs to the universal ribosomal protein uS8 family.</text>
</comment>
<reference key="1">
    <citation type="journal article" date="2005" name="Genome Res.">
        <title>Comparative and functional genomic analyses of the pathogenicity of phytopathogen Xanthomonas campestris pv. campestris.</title>
        <authorList>
            <person name="Qian W."/>
            <person name="Jia Y."/>
            <person name="Ren S.-X."/>
            <person name="He Y.-Q."/>
            <person name="Feng J.-X."/>
            <person name="Lu L.-F."/>
            <person name="Sun Q."/>
            <person name="Ying G."/>
            <person name="Tang D.-J."/>
            <person name="Tang H."/>
            <person name="Wu W."/>
            <person name="Hao P."/>
            <person name="Wang L."/>
            <person name="Jiang B.-L."/>
            <person name="Zeng S."/>
            <person name="Gu W.-Y."/>
            <person name="Lu G."/>
            <person name="Rong L."/>
            <person name="Tian Y."/>
            <person name="Yao Z."/>
            <person name="Fu G."/>
            <person name="Chen B."/>
            <person name="Fang R."/>
            <person name="Qiang B."/>
            <person name="Chen Z."/>
            <person name="Zhao G.-P."/>
            <person name="Tang J.-L."/>
            <person name="He C."/>
        </authorList>
    </citation>
    <scope>NUCLEOTIDE SEQUENCE [LARGE SCALE GENOMIC DNA]</scope>
    <source>
        <strain>8004</strain>
    </source>
</reference>